<gene>
    <name type="primary">Ctbp2</name>
</gene>
<keyword id="KW-0025">Alternative splicing</keyword>
<keyword id="KW-0221">Differentiation</keyword>
<keyword id="KW-0488">Methylation</keyword>
<keyword id="KW-0520">NAD</keyword>
<keyword id="KW-0539">Nucleus</keyword>
<keyword id="KW-0560">Oxidoreductase</keyword>
<keyword id="KW-0597">Phosphoprotein</keyword>
<keyword id="KW-1185">Reference proteome</keyword>
<keyword id="KW-0678">Repressor</keyword>
<keyword id="KW-0770">Synapse</keyword>
<keyword id="KW-0804">Transcription</keyword>
<keyword id="KW-0805">Transcription regulation</keyword>
<comment type="function">
    <text evidence="1">Corepressor targeting diverse transcription regulators. Functions in brown adipose tissue (BAT) differentiation. Isoform 2 probably acts as a scaffold for specialized synapses (By similarity).</text>
</comment>
<comment type="subunit">
    <text evidence="1 2">Interacts with HIPK2, ZNF217 and PNN (By similarity). Interacts with the transcription factors BKLF, delta EF1/AREB6/ZEB, EVI-1 and Friend of GATA (FOG) via the consensus motif P-X-[DNS]-L-[STVA]. Can form a complex with BKLF on a CACCC-box oligonucleotide. Can form homodimers or heterodimers of CTBP1 and CTBP2. Interacts with NRIP1 and WIZ. Interacts with PRDM16; represses white adipose tissue (WAT)-specific genes expression (By similarity). Interacts with MCRIP1 (By similarity).</text>
</comment>
<comment type="subcellular location">
    <subcellularLocation>
        <location evidence="6">Nucleus</location>
    </subcellularLocation>
    <subcellularLocation>
        <location evidence="1">Synapse</location>
    </subcellularLocation>
</comment>
<comment type="alternative products">
    <event type="alternative splicing"/>
    <isoform>
        <id>Q9EQH5-1</id>
        <name>1</name>
        <sequence type="displayed"/>
    </isoform>
    <isoform>
        <id>Q9EQH5-2</id>
        <name>2</name>
        <name>Ribeye</name>
        <sequence type="described" ref="VSP_027611"/>
    </isoform>
</comment>
<comment type="tissue specificity">
    <text evidence="4">Isoform 2 is specifically localized in synaptic ribbon (at protein level).</text>
</comment>
<comment type="PTM">
    <text evidence="1">Phosphorylation by HIPK2 on Ser-428 induces proteasomal degradation.</text>
</comment>
<comment type="similarity">
    <text evidence="6">Belongs to the D-isomer specific 2-hydroxyacid dehydrogenase family.</text>
</comment>
<sequence>MALVDKHKVKRQRLDRICEGIRPQIMNGPLHPRPLVALLDGRDCTVEMPILKDLATVAFCDAQSTQEIHEKVLNEAVGAMMYHTITLTREDLEKFKALRVIVRIGSGYDNVDIKAAGELGIAVCNIPSAAVEETADSTVCHILNLYRRNTWLYQALREGTRVQSVEQIREVASGAARIRGETLGLIGFGRTGQAVAVRAKAFGFSVIFYDPYLQDGIERSLGVQRVYTLQDLLYQSDCVSLHCNLNEHNHHLINDFTIKQMRQGAFLVNAARGGLVDEKALAQALKEGRIRGAALDVHESEPFSFAQGPLKDAPNLICTPHTAWYSEQASLEMREAAATEIRRAITGRIPESLRNCVNKEFFVTSTPWSVIDQQAIHPELNGATYRYPPGIVGVAPGGLPPAMEGIIPGGIPVTHNLPTVAHPSQAPSPNQPTKHGDNREHPNEQ</sequence>
<name>CTBP2_RAT</name>
<protein>
    <recommendedName>
        <fullName>C-terminal-binding protein 2</fullName>
        <shortName>CtBP2</shortName>
    </recommendedName>
</protein>
<proteinExistence type="evidence at protein level"/>
<evidence type="ECO:0000250" key="1"/>
<evidence type="ECO:0000250" key="2">
    <source>
        <dbReference type="UniProtKB" id="P56545"/>
    </source>
</evidence>
<evidence type="ECO:0000256" key="3">
    <source>
        <dbReference type="SAM" id="MobiDB-lite"/>
    </source>
</evidence>
<evidence type="ECO:0000269" key="4">
    <source>
    </source>
</evidence>
<evidence type="ECO:0000303" key="5">
    <source>
    </source>
</evidence>
<evidence type="ECO:0000305" key="6"/>
<accession>Q9EQH5</accession>
<organism>
    <name type="scientific">Rattus norvegicus</name>
    <name type="common">Rat</name>
    <dbReference type="NCBI Taxonomy" id="10116"/>
    <lineage>
        <taxon>Eukaryota</taxon>
        <taxon>Metazoa</taxon>
        <taxon>Chordata</taxon>
        <taxon>Craniata</taxon>
        <taxon>Vertebrata</taxon>
        <taxon>Euteleostomi</taxon>
        <taxon>Mammalia</taxon>
        <taxon>Eutheria</taxon>
        <taxon>Euarchontoglires</taxon>
        <taxon>Glires</taxon>
        <taxon>Rodentia</taxon>
        <taxon>Myomorpha</taxon>
        <taxon>Muroidea</taxon>
        <taxon>Muridae</taxon>
        <taxon>Murinae</taxon>
        <taxon>Rattus</taxon>
    </lineage>
</organism>
<dbReference type="EMBL" id="AF222712">
    <property type="protein sequence ID" value="AAG45952.1"/>
    <property type="molecule type" value="mRNA"/>
</dbReference>
<dbReference type="EMBL" id="AABR03001613">
    <property type="status" value="NOT_ANNOTATED_CDS"/>
    <property type="molecule type" value="Genomic_DNA"/>
</dbReference>
<dbReference type="EMBL" id="AABR03000195">
    <property type="status" value="NOT_ANNOTATED_CDS"/>
    <property type="molecule type" value="Genomic_DNA"/>
</dbReference>
<dbReference type="RefSeq" id="NP_445787.1">
    <molecule id="Q9EQH5-2"/>
    <property type="nucleotide sequence ID" value="NM_053335.2"/>
</dbReference>
<dbReference type="RefSeq" id="XP_038948076.1">
    <molecule id="Q9EQH5-1"/>
    <property type="nucleotide sequence ID" value="XM_039092148.2"/>
</dbReference>
<dbReference type="RefSeq" id="XP_038948081.1">
    <molecule id="Q9EQH5-1"/>
    <property type="nucleotide sequence ID" value="XM_039092153.2"/>
</dbReference>
<dbReference type="RefSeq" id="XP_038948084.1">
    <molecule id="Q9EQH5-1"/>
    <property type="nucleotide sequence ID" value="XM_039092156.2"/>
</dbReference>
<dbReference type="RefSeq" id="XP_038948087.1">
    <molecule id="Q9EQH5-1"/>
    <property type="nucleotide sequence ID" value="XM_039092159.2"/>
</dbReference>
<dbReference type="RefSeq" id="XP_038948093.1">
    <molecule id="Q9EQH5-1"/>
    <property type="nucleotide sequence ID" value="XM_039092165.2"/>
</dbReference>
<dbReference type="RefSeq" id="XP_038948097.1">
    <molecule id="Q9EQH5-1"/>
    <property type="nucleotide sequence ID" value="XM_039092169.2"/>
</dbReference>
<dbReference type="RefSeq" id="XP_063131220.1">
    <molecule id="Q9EQH5-1"/>
    <property type="nucleotide sequence ID" value="XM_063275150.1"/>
</dbReference>
<dbReference type="RefSeq" id="XP_063131224.1">
    <molecule id="Q9EQH5-1"/>
    <property type="nucleotide sequence ID" value="XM_063275154.1"/>
</dbReference>
<dbReference type="RefSeq" id="XP_063131226.1">
    <molecule id="Q9EQH5-1"/>
    <property type="nucleotide sequence ID" value="XM_063275156.1"/>
</dbReference>
<dbReference type="RefSeq" id="XP_063131238.1">
    <molecule id="Q9EQH5-1"/>
    <property type="nucleotide sequence ID" value="XM_063275168.1"/>
</dbReference>
<dbReference type="SMR" id="Q9EQH5"/>
<dbReference type="BioGRID" id="249593">
    <property type="interactions" value="1"/>
</dbReference>
<dbReference type="FunCoup" id="Q9EQH5">
    <property type="interactions" value="2291"/>
</dbReference>
<dbReference type="STRING" id="10116.ENSRNOP00000023404"/>
<dbReference type="iPTMnet" id="Q9EQH5"/>
<dbReference type="PhosphoSitePlus" id="Q9EQH5"/>
<dbReference type="jPOST" id="Q9EQH5"/>
<dbReference type="PaxDb" id="10116-ENSRNOP00000023404"/>
<dbReference type="Ensembl" id="ENSRNOT00000023404.7">
    <molecule id="Q9EQH5-2"/>
    <property type="protein sequence ID" value="ENSRNOP00000023404.3"/>
    <property type="gene ID" value="ENSRNOG00000017326.9"/>
</dbReference>
<dbReference type="Ensembl" id="ENSRNOT00000114061.1">
    <molecule id="Q9EQH5-1"/>
    <property type="protein sequence ID" value="ENSRNOP00000090411.1"/>
    <property type="gene ID" value="ENSRNOG00000017326.9"/>
</dbReference>
<dbReference type="GeneID" id="81717"/>
<dbReference type="KEGG" id="rno:81717"/>
<dbReference type="UCSC" id="RGD:68372">
    <molecule id="Q9EQH5-1"/>
    <property type="organism name" value="rat"/>
</dbReference>
<dbReference type="AGR" id="RGD:68372"/>
<dbReference type="CTD" id="1488"/>
<dbReference type="RGD" id="68372">
    <property type="gene designation" value="Ctbp2"/>
</dbReference>
<dbReference type="eggNOG" id="KOG0067">
    <property type="taxonomic scope" value="Eukaryota"/>
</dbReference>
<dbReference type="GeneTree" id="ENSGT00940000154430"/>
<dbReference type="HOGENOM" id="CLU_012460_0_0_1"/>
<dbReference type="InParanoid" id="Q9EQH5"/>
<dbReference type="OMA" id="GEGFWCE"/>
<dbReference type="OrthoDB" id="9991913at2759"/>
<dbReference type="PhylomeDB" id="Q9EQH5"/>
<dbReference type="TreeFam" id="TF313593"/>
<dbReference type="Reactome" id="R-RNO-4641265">
    <property type="pathway name" value="Repression of WNT target genes"/>
</dbReference>
<dbReference type="PRO" id="PR:Q9EQH5"/>
<dbReference type="Proteomes" id="UP000002494">
    <property type="component" value="Chromosome 1"/>
</dbReference>
<dbReference type="Bgee" id="ENSRNOG00000017326">
    <property type="expression patterns" value="Expressed in ovary and 20 other cell types or tissues"/>
</dbReference>
<dbReference type="GO" id="GO:0098982">
    <property type="term" value="C:GABA-ergic synapse"/>
    <property type="evidence" value="ECO:0000266"/>
    <property type="project" value="RGD"/>
</dbReference>
<dbReference type="GO" id="GO:0098978">
    <property type="term" value="C:glutamatergic synapse"/>
    <property type="evidence" value="ECO:0000266"/>
    <property type="project" value="RGD"/>
</dbReference>
<dbReference type="GO" id="GO:0005634">
    <property type="term" value="C:nucleus"/>
    <property type="evidence" value="ECO:0000250"/>
    <property type="project" value="UniProtKB"/>
</dbReference>
<dbReference type="GO" id="GO:0098684">
    <property type="term" value="C:photoreceptor ribbon synapse"/>
    <property type="evidence" value="ECO:0000266"/>
    <property type="project" value="RGD"/>
</dbReference>
<dbReference type="GO" id="GO:0098831">
    <property type="term" value="C:presynaptic active zone cytoplasmic component"/>
    <property type="evidence" value="ECO:0000266"/>
    <property type="project" value="RGD"/>
</dbReference>
<dbReference type="GO" id="GO:0099523">
    <property type="term" value="C:presynaptic cytosol"/>
    <property type="evidence" value="ECO:0000266"/>
    <property type="project" value="RGD"/>
</dbReference>
<dbReference type="GO" id="GO:0097470">
    <property type="term" value="C:ribbon synapse"/>
    <property type="evidence" value="ECO:0000266"/>
    <property type="project" value="RGD"/>
</dbReference>
<dbReference type="GO" id="GO:0045202">
    <property type="term" value="C:synapse"/>
    <property type="evidence" value="ECO:0000266"/>
    <property type="project" value="RGD"/>
</dbReference>
<dbReference type="GO" id="GO:0017053">
    <property type="term" value="C:transcription repressor complex"/>
    <property type="evidence" value="ECO:0000250"/>
    <property type="project" value="UniProtKB"/>
</dbReference>
<dbReference type="GO" id="GO:0003682">
    <property type="term" value="F:chromatin binding"/>
    <property type="evidence" value="ECO:0000266"/>
    <property type="project" value="RGD"/>
</dbReference>
<dbReference type="GO" id="GO:0140297">
    <property type="term" value="F:DNA-binding transcription factor binding"/>
    <property type="evidence" value="ECO:0000318"/>
    <property type="project" value="GO_Central"/>
</dbReference>
<dbReference type="GO" id="GO:0051287">
    <property type="term" value="F:NAD binding"/>
    <property type="evidence" value="ECO:0007669"/>
    <property type="project" value="InterPro"/>
</dbReference>
<dbReference type="GO" id="GO:0042974">
    <property type="term" value="F:nuclear retinoic acid receptor binding"/>
    <property type="evidence" value="ECO:0000266"/>
    <property type="project" value="RGD"/>
</dbReference>
<dbReference type="GO" id="GO:0016616">
    <property type="term" value="F:oxidoreductase activity, acting on the CH-OH group of donors, NAD or NADP as acceptor"/>
    <property type="evidence" value="ECO:0007669"/>
    <property type="project" value="InterPro"/>
</dbReference>
<dbReference type="GO" id="GO:0019901">
    <property type="term" value="F:protein kinase binding"/>
    <property type="evidence" value="ECO:0000266"/>
    <property type="project" value="RGD"/>
</dbReference>
<dbReference type="GO" id="GO:0044877">
    <property type="term" value="F:protein-containing complex binding"/>
    <property type="evidence" value="ECO:0000266"/>
    <property type="project" value="RGD"/>
</dbReference>
<dbReference type="GO" id="GO:0098882">
    <property type="term" value="F:structural constituent of presynaptic active zone"/>
    <property type="evidence" value="ECO:0000266"/>
    <property type="project" value="RGD"/>
</dbReference>
<dbReference type="GO" id="GO:0003713">
    <property type="term" value="F:transcription coactivator activity"/>
    <property type="evidence" value="ECO:0000266"/>
    <property type="project" value="RGD"/>
</dbReference>
<dbReference type="GO" id="GO:0001221">
    <property type="term" value="F:transcription coregulator binding"/>
    <property type="evidence" value="ECO:0000266"/>
    <property type="project" value="RGD"/>
</dbReference>
<dbReference type="GO" id="GO:0003714">
    <property type="term" value="F:transcription corepressor activity"/>
    <property type="evidence" value="ECO:0000266"/>
    <property type="project" value="RGD"/>
</dbReference>
<dbReference type="GO" id="GO:0001222">
    <property type="term" value="F:transcription corepressor binding"/>
    <property type="evidence" value="ECO:0000266"/>
    <property type="project" value="RGD"/>
</dbReference>
<dbReference type="GO" id="GO:1990830">
    <property type="term" value="P:cellular response to leukemia inhibitory factor"/>
    <property type="evidence" value="ECO:0000266"/>
    <property type="project" value="RGD"/>
</dbReference>
<dbReference type="GO" id="GO:0045892">
    <property type="term" value="P:negative regulation of DNA-templated transcription"/>
    <property type="evidence" value="ECO:0000250"/>
    <property type="project" value="UniProtKB"/>
</dbReference>
<dbReference type="GO" id="GO:0048386">
    <property type="term" value="P:positive regulation of retinoic acid receptor signaling pathway"/>
    <property type="evidence" value="ECO:0000266"/>
    <property type="project" value="RGD"/>
</dbReference>
<dbReference type="GO" id="GO:0045944">
    <property type="term" value="P:positive regulation of transcription by RNA polymerase II"/>
    <property type="evidence" value="ECO:0000266"/>
    <property type="project" value="RGD"/>
</dbReference>
<dbReference type="GO" id="GO:0006357">
    <property type="term" value="P:regulation of transcription by RNA polymerase II"/>
    <property type="evidence" value="ECO:0000318"/>
    <property type="project" value="GO_Central"/>
</dbReference>
<dbReference type="GO" id="GO:0016081">
    <property type="term" value="P:synaptic vesicle docking"/>
    <property type="evidence" value="ECO:0000266"/>
    <property type="project" value="RGD"/>
</dbReference>
<dbReference type="GO" id="GO:0050872">
    <property type="term" value="P:white fat cell differentiation"/>
    <property type="evidence" value="ECO:0000250"/>
    <property type="project" value="UniProtKB"/>
</dbReference>
<dbReference type="CDD" id="cd05299">
    <property type="entry name" value="CtBP_dh"/>
    <property type="match status" value="1"/>
</dbReference>
<dbReference type="FunFam" id="3.40.50.720:FF:001383">
    <property type="entry name" value="C-terminal-binding protein 2"/>
    <property type="match status" value="1"/>
</dbReference>
<dbReference type="Gene3D" id="3.40.50.720">
    <property type="entry name" value="NAD(P)-binding Rossmann-like Domain"/>
    <property type="match status" value="2"/>
</dbReference>
<dbReference type="InterPro" id="IPR043322">
    <property type="entry name" value="CtBP"/>
</dbReference>
<dbReference type="InterPro" id="IPR051638">
    <property type="entry name" value="CTBP_dehydrogenase"/>
</dbReference>
<dbReference type="InterPro" id="IPR006139">
    <property type="entry name" value="D-isomer_2_OHA_DH_cat_dom"/>
</dbReference>
<dbReference type="InterPro" id="IPR029753">
    <property type="entry name" value="D-isomer_DH_CS"/>
</dbReference>
<dbReference type="InterPro" id="IPR006140">
    <property type="entry name" value="D-isomer_DH_NAD-bd"/>
</dbReference>
<dbReference type="InterPro" id="IPR036291">
    <property type="entry name" value="NAD(P)-bd_dom_sf"/>
</dbReference>
<dbReference type="PANTHER" id="PTHR46029">
    <property type="entry name" value="C-TERMINAL-BINDING PROTEIN"/>
    <property type="match status" value="1"/>
</dbReference>
<dbReference type="PANTHER" id="PTHR46029:SF3">
    <property type="entry name" value="C-TERMINAL-BINDING PROTEIN 2"/>
    <property type="match status" value="1"/>
</dbReference>
<dbReference type="Pfam" id="PF00389">
    <property type="entry name" value="2-Hacid_dh"/>
    <property type="match status" value="1"/>
</dbReference>
<dbReference type="Pfam" id="PF02826">
    <property type="entry name" value="2-Hacid_dh_C"/>
    <property type="match status" value="1"/>
</dbReference>
<dbReference type="SUPFAM" id="SSF52283">
    <property type="entry name" value="Formate/glycerate dehydrogenase catalytic domain-like"/>
    <property type="match status" value="1"/>
</dbReference>
<dbReference type="SUPFAM" id="SSF51735">
    <property type="entry name" value="NAD(P)-binding Rossmann-fold domains"/>
    <property type="match status" value="1"/>
</dbReference>
<dbReference type="PROSITE" id="PS00671">
    <property type="entry name" value="D_2_HYDROXYACID_DH_3"/>
    <property type="match status" value="1"/>
</dbReference>
<feature type="chain" id="PRO_0000299356" description="C-terminal-binding protein 2">
    <location>
        <begin position="1"/>
        <end position="445"/>
    </location>
</feature>
<feature type="region of interest" description="Disordered" evidence="3">
    <location>
        <begin position="414"/>
        <end position="445"/>
    </location>
</feature>
<feature type="compositionally biased region" description="Basic and acidic residues" evidence="3">
    <location>
        <begin position="434"/>
        <end position="445"/>
    </location>
</feature>
<feature type="active site" evidence="1">
    <location>
        <position position="272"/>
    </location>
</feature>
<feature type="active site" evidence="1">
    <location>
        <position position="301"/>
    </location>
</feature>
<feature type="active site" description="Proton donor" evidence="1">
    <location>
        <position position="321"/>
    </location>
</feature>
<feature type="binding site" evidence="1">
    <location>
        <position position="106"/>
    </location>
    <ligand>
        <name>NAD(+)</name>
        <dbReference type="ChEBI" id="CHEBI:57540"/>
    </ligand>
</feature>
<feature type="binding site" evidence="1">
    <location>
        <begin position="186"/>
        <end position="191"/>
    </location>
    <ligand>
        <name>NAD(+)</name>
        <dbReference type="ChEBI" id="CHEBI:57540"/>
    </ligand>
</feature>
<feature type="binding site" evidence="1">
    <location>
        <position position="210"/>
    </location>
    <ligand>
        <name>NAD(+)</name>
        <dbReference type="ChEBI" id="CHEBI:57540"/>
    </ligand>
</feature>
<feature type="binding site" evidence="1">
    <location>
        <begin position="243"/>
        <end position="249"/>
    </location>
    <ligand>
        <name>NAD(+)</name>
        <dbReference type="ChEBI" id="CHEBI:57540"/>
    </ligand>
</feature>
<feature type="binding site" evidence="1">
    <location>
        <begin position="270"/>
        <end position="272"/>
    </location>
    <ligand>
        <name>NAD(+)</name>
        <dbReference type="ChEBI" id="CHEBI:57540"/>
    </ligand>
</feature>
<feature type="binding site" evidence="1">
    <location>
        <position position="296"/>
    </location>
    <ligand>
        <name>NAD(+)</name>
        <dbReference type="ChEBI" id="CHEBI:57540"/>
    </ligand>
</feature>
<feature type="binding site" evidence="1">
    <location>
        <begin position="321"/>
        <end position="324"/>
    </location>
    <ligand>
        <name>NAD(+)</name>
        <dbReference type="ChEBI" id="CHEBI:57540"/>
    </ligand>
</feature>
<feature type="modified residue" description="Asymmetric dimethylarginine" evidence="2">
    <location>
        <position position="22"/>
    </location>
</feature>
<feature type="modified residue" description="Phosphoserine; by HIPK2" evidence="2">
    <location>
        <position position="428"/>
    </location>
</feature>
<feature type="splice variant" id="VSP_027611" description="In isoform 2." evidence="5">
    <original>MALVDKHKVKRQRLDRICEG</original>
    <variation>MPVPSRHINIGRSQSWDAAGWYEGPWENAGPPGRRSSLTYGPGEGVWCELVNHRAQDTESCLSREAFYNSLASRKGSVPDFTFYDSRQAVMSGRGSVLPQDYYGDPSRGTRVPKEPPFYRDPGTSRPVPSYGVLGSRIPWEQVQGQLPALQDAGHLYRESGSKTVLHGQRTHCRAPSPGRYGREQPDSRLGIEVPTYSPNSSQVYNDICERPVDSTHARQVAPTCLVVDPSSTAPTENSTGVAPGSLNRGYGPTRESIHSKLAYENYEADLSTFQGPGGKRTVYPEFLALLRAEGVAEATLAALLQQGFDSPAVLATLEDADIKSVAPNLGQARVLSRLVSSCRTEMQFRRQDRTGPPPRHRSSSFSHRSELLPNDTASLGTTALQFHPAGPLQTPSPRGGDLGRRPSSAPSQHLLETAATYSAPVVGSQTPHLPSNSGYSSPTPCALTARLASSYPSQAGVALTANPGPSVPLHSSPRTAYSTSYTVPMELLKRERSVTASPLPSPHASPQLLRKPGAAPVEPAALPPVRQSLHTPHPPYQKVARRTGAPIIVSTMLTPEPS</variation>
    <location>
        <begin position="1"/>
        <end position="20"/>
    </location>
</feature>
<reference key="1">
    <citation type="journal article" date="2000" name="Neuron">
        <title>RIBEYE, a component of synaptic ribbons: a protein's journey through evolution provides insight into synaptic ribbon function.</title>
        <authorList>
            <person name="Schmitz F."/>
            <person name="Koenigstorfer A."/>
            <person name="Suedhof T.C."/>
        </authorList>
    </citation>
    <scope>NUCLEOTIDE SEQUENCE [MRNA] (ISOFORM 2)</scope>
    <scope>TISSUE SPECIFICITY</scope>
</reference>
<reference key="2">
    <citation type="journal article" date="2004" name="Nature">
        <title>Genome sequence of the Brown Norway rat yields insights into mammalian evolution.</title>
        <authorList>
            <person name="Gibbs R.A."/>
            <person name="Weinstock G.M."/>
            <person name="Metzker M.L."/>
            <person name="Muzny D.M."/>
            <person name="Sodergren E.J."/>
            <person name="Scherer S."/>
            <person name="Scott G."/>
            <person name="Steffen D."/>
            <person name="Worley K.C."/>
            <person name="Burch P.E."/>
            <person name="Okwuonu G."/>
            <person name="Hines S."/>
            <person name="Lewis L."/>
            <person name="Deramo C."/>
            <person name="Delgado O."/>
            <person name="Dugan-Rocha S."/>
            <person name="Miner G."/>
            <person name="Morgan M."/>
            <person name="Hawes A."/>
            <person name="Gill R."/>
            <person name="Holt R.A."/>
            <person name="Adams M.D."/>
            <person name="Amanatides P.G."/>
            <person name="Baden-Tillson H."/>
            <person name="Barnstead M."/>
            <person name="Chin S."/>
            <person name="Evans C.A."/>
            <person name="Ferriera S."/>
            <person name="Fosler C."/>
            <person name="Glodek A."/>
            <person name="Gu Z."/>
            <person name="Jennings D."/>
            <person name="Kraft C.L."/>
            <person name="Nguyen T."/>
            <person name="Pfannkoch C.M."/>
            <person name="Sitter C."/>
            <person name="Sutton G.G."/>
            <person name="Venter J.C."/>
            <person name="Woodage T."/>
            <person name="Smith D."/>
            <person name="Lee H.-M."/>
            <person name="Gustafson E."/>
            <person name="Cahill P."/>
            <person name="Kana A."/>
            <person name="Doucette-Stamm L."/>
            <person name="Weinstock K."/>
            <person name="Fechtel K."/>
            <person name="Weiss R.B."/>
            <person name="Dunn D.M."/>
            <person name="Green E.D."/>
            <person name="Blakesley R.W."/>
            <person name="Bouffard G.G."/>
            <person name="De Jong P.J."/>
            <person name="Osoegawa K."/>
            <person name="Zhu B."/>
            <person name="Marra M."/>
            <person name="Schein J."/>
            <person name="Bosdet I."/>
            <person name="Fjell C."/>
            <person name="Jones S."/>
            <person name="Krzywinski M."/>
            <person name="Mathewson C."/>
            <person name="Siddiqui A."/>
            <person name="Wye N."/>
            <person name="McPherson J."/>
            <person name="Zhao S."/>
            <person name="Fraser C.M."/>
            <person name="Shetty J."/>
            <person name="Shatsman S."/>
            <person name="Geer K."/>
            <person name="Chen Y."/>
            <person name="Abramzon S."/>
            <person name="Nierman W.C."/>
            <person name="Havlak P.H."/>
            <person name="Chen R."/>
            <person name="Durbin K.J."/>
            <person name="Egan A."/>
            <person name="Ren Y."/>
            <person name="Song X.-Z."/>
            <person name="Li B."/>
            <person name="Liu Y."/>
            <person name="Qin X."/>
            <person name="Cawley S."/>
            <person name="Cooney A.J."/>
            <person name="D'Souza L.M."/>
            <person name="Martin K."/>
            <person name="Wu J.Q."/>
            <person name="Gonzalez-Garay M.L."/>
            <person name="Jackson A.R."/>
            <person name="Kalafus K.J."/>
            <person name="McLeod M.P."/>
            <person name="Milosavljevic A."/>
            <person name="Virk D."/>
            <person name="Volkov A."/>
            <person name="Wheeler D.A."/>
            <person name="Zhang Z."/>
            <person name="Bailey J.A."/>
            <person name="Eichler E.E."/>
            <person name="Tuzun E."/>
            <person name="Birney E."/>
            <person name="Mongin E."/>
            <person name="Ureta-Vidal A."/>
            <person name="Woodwark C."/>
            <person name="Zdobnov E."/>
            <person name="Bork P."/>
            <person name="Suyama M."/>
            <person name="Torrents D."/>
            <person name="Alexandersson M."/>
            <person name="Trask B.J."/>
            <person name="Young J.M."/>
            <person name="Huang H."/>
            <person name="Wang H."/>
            <person name="Xing H."/>
            <person name="Daniels S."/>
            <person name="Gietzen D."/>
            <person name="Schmidt J."/>
            <person name="Stevens K."/>
            <person name="Vitt U."/>
            <person name="Wingrove J."/>
            <person name="Camara F."/>
            <person name="Mar Alba M."/>
            <person name="Abril J.F."/>
            <person name="Guigo R."/>
            <person name="Smit A."/>
            <person name="Dubchak I."/>
            <person name="Rubin E.M."/>
            <person name="Couronne O."/>
            <person name="Poliakov A."/>
            <person name="Huebner N."/>
            <person name="Ganten D."/>
            <person name="Goesele C."/>
            <person name="Hummel O."/>
            <person name="Kreitler T."/>
            <person name="Lee Y.-A."/>
            <person name="Monti J."/>
            <person name="Schulz H."/>
            <person name="Zimdahl H."/>
            <person name="Himmelbauer H."/>
            <person name="Lehrach H."/>
            <person name="Jacob H.J."/>
            <person name="Bromberg S."/>
            <person name="Gullings-Handley J."/>
            <person name="Jensen-Seaman M.I."/>
            <person name="Kwitek A.E."/>
            <person name="Lazar J."/>
            <person name="Pasko D."/>
            <person name="Tonellato P.J."/>
            <person name="Twigger S."/>
            <person name="Ponting C.P."/>
            <person name="Duarte J.M."/>
            <person name="Rice S."/>
            <person name="Goodstadt L."/>
            <person name="Beatson S.A."/>
            <person name="Emes R.D."/>
            <person name="Winter E.E."/>
            <person name="Webber C."/>
            <person name="Brandt P."/>
            <person name="Nyakatura G."/>
            <person name="Adetobi M."/>
            <person name="Chiaromonte F."/>
            <person name="Elnitski L."/>
            <person name="Eswara P."/>
            <person name="Hardison R.C."/>
            <person name="Hou M."/>
            <person name="Kolbe D."/>
            <person name="Makova K."/>
            <person name="Miller W."/>
            <person name="Nekrutenko A."/>
            <person name="Riemer C."/>
            <person name="Schwartz S."/>
            <person name="Taylor J."/>
            <person name="Yang S."/>
            <person name="Zhang Y."/>
            <person name="Lindpaintner K."/>
            <person name="Andrews T.D."/>
            <person name="Caccamo M."/>
            <person name="Clamp M."/>
            <person name="Clarke L."/>
            <person name="Curwen V."/>
            <person name="Durbin R.M."/>
            <person name="Eyras E."/>
            <person name="Searle S.M."/>
            <person name="Cooper G.M."/>
            <person name="Batzoglou S."/>
            <person name="Brudno M."/>
            <person name="Sidow A."/>
            <person name="Stone E.A."/>
            <person name="Payseur B.A."/>
            <person name="Bourque G."/>
            <person name="Lopez-Otin C."/>
            <person name="Puente X.S."/>
            <person name="Chakrabarti K."/>
            <person name="Chatterji S."/>
            <person name="Dewey C."/>
            <person name="Pachter L."/>
            <person name="Bray N."/>
            <person name="Yap V.B."/>
            <person name="Caspi A."/>
            <person name="Tesler G."/>
            <person name="Pevzner P.A."/>
            <person name="Haussler D."/>
            <person name="Roskin K.M."/>
            <person name="Baertsch R."/>
            <person name="Clawson H."/>
            <person name="Furey T.S."/>
            <person name="Hinrichs A.S."/>
            <person name="Karolchik D."/>
            <person name="Kent W.J."/>
            <person name="Rosenbloom K.R."/>
            <person name="Trumbower H."/>
            <person name="Weirauch M."/>
            <person name="Cooper D.N."/>
            <person name="Stenson P.D."/>
            <person name="Ma B."/>
            <person name="Brent M."/>
            <person name="Arumugam M."/>
            <person name="Shteynberg D."/>
            <person name="Copley R.R."/>
            <person name="Taylor M.S."/>
            <person name="Riethman H."/>
            <person name="Mudunuri U."/>
            <person name="Peterson J."/>
            <person name="Guyer M."/>
            <person name="Felsenfeld A."/>
            <person name="Old S."/>
            <person name="Mockrin S."/>
            <person name="Collins F.S."/>
        </authorList>
    </citation>
    <scope>NUCLEOTIDE SEQUENCE [LARGE SCALE GENOMIC DNA]</scope>
    <source>
        <strain>Brown Norway</strain>
    </source>
</reference>
<reference key="3">
    <citation type="journal article" date="2012" name="Nat. Commun.">
        <title>Quantitative maps of protein phosphorylation sites across 14 different rat organs and tissues.</title>
        <authorList>
            <person name="Lundby A."/>
            <person name="Secher A."/>
            <person name="Lage K."/>
            <person name="Nordsborg N.B."/>
            <person name="Dmytriyev A."/>
            <person name="Lundby C."/>
            <person name="Olsen J.V."/>
        </authorList>
    </citation>
    <scope>IDENTIFICATION BY MASS SPECTROMETRY [LARGE SCALE ANALYSIS]</scope>
</reference>